<gene>
    <name evidence="1" type="primary">rplC</name>
    <name type="ordered locus">RL1774</name>
</gene>
<organism>
    <name type="scientific">Rhizobium johnstonii (strain DSM 114642 / LMG 32736 / 3841)</name>
    <name type="common">Rhizobium leguminosarum bv. viciae</name>
    <dbReference type="NCBI Taxonomy" id="216596"/>
    <lineage>
        <taxon>Bacteria</taxon>
        <taxon>Pseudomonadati</taxon>
        <taxon>Pseudomonadota</taxon>
        <taxon>Alphaproteobacteria</taxon>
        <taxon>Hyphomicrobiales</taxon>
        <taxon>Rhizobiaceae</taxon>
        <taxon>Rhizobium/Agrobacterium group</taxon>
        <taxon>Rhizobium</taxon>
        <taxon>Rhizobium johnstonii</taxon>
    </lineage>
</organism>
<accession>Q1MIE1</accession>
<sequence>MRSGVIAQKVGMTRVYNDAGEHVPVTVLRMEGCQVVATRTVEKNGYTAVQLGAGQAKVKNTSKAMRGNFAIANVEPKAKLTEFRVSEDQLLEVGTEIKAGHFAAGQLVDVTGTTIGKGFAGAMKRHGFGGLRATHGVSVSHRSHGSTGSRQDPGKVFKNKKMAGHMGQTRVTTQNLEVVSTDEDRGLILIKGAVPGSKGAWIIVRDAVKSAAK</sequence>
<proteinExistence type="inferred from homology"/>
<comment type="function">
    <text evidence="1">One of the primary rRNA binding proteins, it binds directly near the 3'-end of the 23S rRNA, where it nucleates assembly of the 50S subunit.</text>
</comment>
<comment type="subunit">
    <text evidence="1">Part of the 50S ribosomal subunit. Forms a cluster with proteins L14 and L19.</text>
</comment>
<comment type="PTM">
    <text evidence="1">Methylated by PrmB.</text>
</comment>
<comment type="similarity">
    <text evidence="1">Belongs to the universal ribosomal protein uL3 family.</text>
</comment>
<dbReference type="EMBL" id="AM236080">
    <property type="protein sequence ID" value="CAK07269.1"/>
    <property type="molecule type" value="Genomic_DNA"/>
</dbReference>
<dbReference type="RefSeq" id="WP_003547548.1">
    <property type="nucleotide sequence ID" value="NC_008380.1"/>
</dbReference>
<dbReference type="SMR" id="Q1MIE1"/>
<dbReference type="EnsemblBacteria" id="CAK07269">
    <property type="protein sequence ID" value="CAK07269"/>
    <property type="gene ID" value="RL1774"/>
</dbReference>
<dbReference type="GeneID" id="67484963"/>
<dbReference type="KEGG" id="rle:RL1774"/>
<dbReference type="eggNOG" id="COG0087">
    <property type="taxonomic scope" value="Bacteria"/>
</dbReference>
<dbReference type="HOGENOM" id="CLU_044142_2_0_5"/>
<dbReference type="Proteomes" id="UP000006575">
    <property type="component" value="Chromosome"/>
</dbReference>
<dbReference type="GO" id="GO:0022625">
    <property type="term" value="C:cytosolic large ribosomal subunit"/>
    <property type="evidence" value="ECO:0007669"/>
    <property type="project" value="TreeGrafter"/>
</dbReference>
<dbReference type="GO" id="GO:0019843">
    <property type="term" value="F:rRNA binding"/>
    <property type="evidence" value="ECO:0007669"/>
    <property type="project" value="UniProtKB-UniRule"/>
</dbReference>
<dbReference type="GO" id="GO:0003735">
    <property type="term" value="F:structural constituent of ribosome"/>
    <property type="evidence" value="ECO:0007669"/>
    <property type="project" value="InterPro"/>
</dbReference>
<dbReference type="GO" id="GO:0006412">
    <property type="term" value="P:translation"/>
    <property type="evidence" value="ECO:0007669"/>
    <property type="project" value="UniProtKB-UniRule"/>
</dbReference>
<dbReference type="FunFam" id="2.40.30.10:FF:000004">
    <property type="entry name" value="50S ribosomal protein L3"/>
    <property type="match status" value="1"/>
</dbReference>
<dbReference type="FunFam" id="3.30.160.810:FF:000001">
    <property type="entry name" value="50S ribosomal protein L3"/>
    <property type="match status" value="1"/>
</dbReference>
<dbReference type="Gene3D" id="3.30.160.810">
    <property type="match status" value="1"/>
</dbReference>
<dbReference type="Gene3D" id="2.40.30.10">
    <property type="entry name" value="Translation factors"/>
    <property type="match status" value="1"/>
</dbReference>
<dbReference type="HAMAP" id="MF_01325_B">
    <property type="entry name" value="Ribosomal_uL3_B"/>
    <property type="match status" value="1"/>
</dbReference>
<dbReference type="InterPro" id="IPR000597">
    <property type="entry name" value="Ribosomal_uL3"/>
</dbReference>
<dbReference type="InterPro" id="IPR019927">
    <property type="entry name" value="Ribosomal_uL3_bac/org-type"/>
</dbReference>
<dbReference type="InterPro" id="IPR019926">
    <property type="entry name" value="Ribosomal_uL3_CS"/>
</dbReference>
<dbReference type="InterPro" id="IPR009000">
    <property type="entry name" value="Transl_B-barrel_sf"/>
</dbReference>
<dbReference type="NCBIfam" id="TIGR03625">
    <property type="entry name" value="L3_bact"/>
    <property type="match status" value="1"/>
</dbReference>
<dbReference type="PANTHER" id="PTHR11229">
    <property type="entry name" value="50S RIBOSOMAL PROTEIN L3"/>
    <property type="match status" value="1"/>
</dbReference>
<dbReference type="PANTHER" id="PTHR11229:SF16">
    <property type="entry name" value="LARGE RIBOSOMAL SUBUNIT PROTEIN UL3C"/>
    <property type="match status" value="1"/>
</dbReference>
<dbReference type="Pfam" id="PF00297">
    <property type="entry name" value="Ribosomal_L3"/>
    <property type="match status" value="1"/>
</dbReference>
<dbReference type="SUPFAM" id="SSF50447">
    <property type="entry name" value="Translation proteins"/>
    <property type="match status" value="1"/>
</dbReference>
<dbReference type="PROSITE" id="PS00474">
    <property type="entry name" value="RIBOSOMAL_L3"/>
    <property type="match status" value="1"/>
</dbReference>
<feature type="chain" id="PRO_1000052121" description="Large ribosomal subunit protein uL3">
    <location>
        <begin position="1"/>
        <end position="213"/>
    </location>
</feature>
<feature type="modified residue" description="N5-methylglutamine" evidence="1">
    <location>
        <position position="151"/>
    </location>
</feature>
<keyword id="KW-0488">Methylation</keyword>
<keyword id="KW-0687">Ribonucleoprotein</keyword>
<keyword id="KW-0689">Ribosomal protein</keyword>
<keyword id="KW-0694">RNA-binding</keyword>
<keyword id="KW-0699">rRNA-binding</keyword>
<evidence type="ECO:0000255" key="1">
    <source>
        <dbReference type="HAMAP-Rule" id="MF_01325"/>
    </source>
</evidence>
<evidence type="ECO:0000305" key="2"/>
<reference key="1">
    <citation type="journal article" date="2006" name="Genome Biol.">
        <title>The genome of Rhizobium leguminosarum has recognizable core and accessory components.</title>
        <authorList>
            <person name="Young J.P.W."/>
            <person name="Crossman L.C."/>
            <person name="Johnston A.W.B."/>
            <person name="Thomson N.R."/>
            <person name="Ghazoui Z.F."/>
            <person name="Hull K.H."/>
            <person name="Wexler M."/>
            <person name="Curson A.R.J."/>
            <person name="Todd J.D."/>
            <person name="Poole P.S."/>
            <person name="Mauchline T.H."/>
            <person name="East A.K."/>
            <person name="Quail M.A."/>
            <person name="Churcher C."/>
            <person name="Arrowsmith C."/>
            <person name="Cherevach I."/>
            <person name="Chillingworth T."/>
            <person name="Clarke K."/>
            <person name="Cronin A."/>
            <person name="Davis P."/>
            <person name="Fraser A."/>
            <person name="Hance Z."/>
            <person name="Hauser H."/>
            <person name="Jagels K."/>
            <person name="Moule S."/>
            <person name="Mungall K."/>
            <person name="Norbertczak H."/>
            <person name="Rabbinowitsch E."/>
            <person name="Sanders M."/>
            <person name="Simmonds M."/>
            <person name="Whitehead S."/>
            <person name="Parkhill J."/>
        </authorList>
    </citation>
    <scope>NUCLEOTIDE SEQUENCE [LARGE SCALE GENOMIC DNA]</scope>
    <source>
        <strain>DSM 114642 / LMG 32736 / 3841</strain>
    </source>
</reference>
<protein>
    <recommendedName>
        <fullName evidence="1">Large ribosomal subunit protein uL3</fullName>
    </recommendedName>
    <alternativeName>
        <fullName evidence="2">50S ribosomal protein L3</fullName>
    </alternativeName>
</protein>
<name>RL3_RHIJ3</name>